<keyword id="KW-0067">ATP-binding</keyword>
<keyword id="KW-0131">Cell cycle</keyword>
<keyword id="KW-0132">Cell division</keyword>
<keyword id="KW-0133">Cell shape</keyword>
<keyword id="KW-0961">Cell wall biogenesis/degradation</keyword>
<keyword id="KW-0963">Cytoplasm</keyword>
<keyword id="KW-0436">Ligase</keyword>
<keyword id="KW-0460">Magnesium</keyword>
<keyword id="KW-0547">Nucleotide-binding</keyword>
<keyword id="KW-0573">Peptidoglycan synthesis</keyword>
<keyword id="KW-1185">Reference proteome</keyword>
<evidence type="ECO:0000255" key="1">
    <source>
        <dbReference type="HAMAP-Rule" id="MF_00208"/>
    </source>
</evidence>
<feature type="chain" id="PRO_1000012401" description="UDP-N-acetylmuramoyl-L-alanyl-D-glutamate--2,6-diaminopimelate ligase">
    <location>
        <begin position="1"/>
        <end position="489"/>
    </location>
</feature>
<feature type="short sequence motif" description="Meso-diaminopimelate recognition motif">
    <location>
        <begin position="405"/>
        <end position="408"/>
    </location>
</feature>
<feature type="binding site" evidence="1">
    <location>
        <position position="30"/>
    </location>
    <ligand>
        <name>UDP-N-acetyl-alpha-D-muramoyl-L-alanyl-D-glutamate</name>
        <dbReference type="ChEBI" id="CHEBI:83900"/>
    </ligand>
</feature>
<feature type="binding site" evidence="1">
    <location>
        <begin position="110"/>
        <end position="116"/>
    </location>
    <ligand>
        <name>ATP</name>
        <dbReference type="ChEBI" id="CHEBI:30616"/>
    </ligand>
</feature>
<feature type="binding site" evidence="1">
    <location>
        <begin position="152"/>
        <end position="153"/>
    </location>
    <ligand>
        <name>UDP-N-acetyl-alpha-D-muramoyl-L-alanyl-D-glutamate</name>
        <dbReference type="ChEBI" id="CHEBI:83900"/>
    </ligand>
</feature>
<feature type="binding site" evidence="1">
    <location>
        <position position="179"/>
    </location>
    <ligand>
        <name>UDP-N-acetyl-alpha-D-muramoyl-L-alanyl-D-glutamate</name>
        <dbReference type="ChEBI" id="CHEBI:83900"/>
    </ligand>
</feature>
<feature type="binding site" evidence="1">
    <location>
        <position position="187"/>
    </location>
    <ligand>
        <name>UDP-N-acetyl-alpha-D-muramoyl-L-alanyl-D-glutamate</name>
        <dbReference type="ChEBI" id="CHEBI:83900"/>
    </ligand>
</feature>
<feature type="binding site" evidence="1">
    <location>
        <position position="381"/>
    </location>
    <ligand>
        <name>meso-2,6-diaminopimelate</name>
        <dbReference type="ChEBI" id="CHEBI:57791"/>
    </ligand>
</feature>
<feature type="binding site" evidence="1">
    <location>
        <begin position="405"/>
        <end position="408"/>
    </location>
    <ligand>
        <name>meso-2,6-diaminopimelate</name>
        <dbReference type="ChEBI" id="CHEBI:57791"/>
    </ligand>
</feature>
<feature type="binding site" evidence="1">
    <location>
        <position position="458"/>
    </location>
    <ligand>
        <name>meso-2,6-diaminopimelate</name>
        <dbReference type="ChEBI" id="CHEBI:57791"/>
    </ligand>
</feature>
<feature type="binding site" evidence="1">
    <location>
        <position position="462"/>
    </location>
    <ligand>
        <name>meso-2,6-diaminopimelate</name>
        <dbReference type="ChEBI" id="CHEBI:57791"/>
    </ligand>
</feature>
<feature type="modified residue" description="N6-carboxylysine" evidence="1">
    <location>
        <position position="219"/>
    </location>
</feature>
<sequence length="489" mass="54176">MKLVELIKNLTIELQDGPLDREISGIAYDSRRVKPGDLFICISGLKSDGHLFAGQAIENGAVAVLAERQLDTGGKATLLTTPDTRSALALLAANYYGRPSKSIRVVAVTGTNGKTTTTDLIKAILEEAGKKTAIMGTLYAQVGEIQREMQHTTPEALEIESFMALCREEKADYIVMEVSSHALQLQRVAEIDFNVAVFTNLTQDHLDFHQNMDNYRAAKLQLFQMIKEEKQNYAIINIDDPWAEEIFQAATIPCRSYGIKKRSDYQAGELKIDLDGSSFRLHYGDNSLMINMKLIGLFSIYNALAAISFALQEGIDPGLIQSALARVEGVPGRFEKVDCGQDFAVIVDYAHTPDGLENILQTSRELGKKRLICVFGCGGDRDRSKRPLMGEIAAKYSDFCVVTSDNPRSEDPHAIIAEIIPGMDKVEKSRYAIIVDRREAIRHAIHLARTGDLVVIAGKGHENYQLVKDQVLEFDDRKVAAELLRGKVK</sequence>
<name>MURE_SYNWW</name>
<proteinExistence type="inferred from homology"/>
<gene>
    <name evidence="1" type="primary">murE</name>
    <name type="ordered locus">Swol_0821</name>
</gene>
<accession>Q0AYR3</accession>
<comment type="function">
    <text evidence="1">Catalyzes the addition of meso-diaminopimelic acid to the nucleotide precursor UDP-N-acetylmuramoyl-L-alanyl-D-glutamate (UMAG) in the biosynthesis of bacterial cell-wall peptidoglycan.</text>
</comment>
<comment type="catalytic activity">
    <reaction evidence="1">
        <text>UDP-N-acetyl-alpha-D-muramoyl-L-alanyl-D-glutamate + meso-2,6-diaminopimelate + ATP = UDP-N-acetyl-alpha-D-muramoyl-L-alanyl-gamma-D-glutamyl-meso-2,6-diaminopimelate + ADP + phosphate + H(+)</text>
        <dbReference type="Rhea" id="RHEA:23676"/>
        <dbReference type="ChEBI" id="CHEBI:15378"/>
        <dbReference type="ChEBI" id="CHEBI:30616"/>
        <dbReference type="ChEBI" id="CHEBI:43474"/>
        <dbReference type="ChEBI" id="CHEBI:57791"/>
        <dbReference type="ChEBI" id="CHEBI:83900"/>
        <dbReference type="ChEBI" id="CHEBI:83905"/>
        <dbReference type="ChEBI" id="CHEBI:456216"/>
        <dbReference type="EC" id="6.3.2.13"/>
    </reaction>
</comment>
<comment type="cofactor">
    <cofactor evidence="1">
        <name>Mg(2+)</name>
        <dbReference type="ChEBI" id="CHEBI:18420"/>
    </cofactor>
</comment>
<comment type="pathway">
    <text evidence="1">Cell wall biogenesis; peptidoglycan biosynthesis.</text>
</comment>
<comment type="subcellular location">
    <subcellularLocation>
        <location evidence="1">Cytoplasm</location>
    </subcellularLocation>
</comment>
<comment type="PTM">
    <text evidence="1">Carboxylation is probably crucial for Mg(2+) binding and, consequently, for the gamma-phosphate positioning of ATP.</text>
</comment>
<comment type="similarity">
    <text evidence="1">Belongs to the MurCDEF family. MurE subfamily.</text>
</comment>
<protein>
    <recommendedName>
        <fullName evidence="1">UDP-N-acetylmuramoyl-L-alanyl-D-glutamate--2,6-diaminopimelate ligase</fullName>
        <ecNumber evidence="1">6.3.2.13</ecNumber>
    </recommendedName>
    <alternativeName>
        <fullName evidence="1">Meso-A2pm-adding enzyme</fullName>
    </alternativeName>
    <alternativeName>
        <fullName evidence="1">Meso-diaminopimelate-adding enzyme</fullName>
    </alternativeName>
    <alternativeName>
        <fullName evidence="1">UDP-MurNAc-L-Ala-D-Glu:meso-diaminopimelate ligase</fullName>
    </alternativeName>
    <alternativeName>
        <fullName evidence="1">UDP-MurNAc-tripeptide synthetase</fullName>
    </alternativeName>
    <alternativeName>
        <fullName evidence="1">UDP-N-acetylmuramyl-tripeptide synthetase</fullName>
    </alternativeName>
</protein>
<organism>
    <name type="scientific">Syntrophomonas wolfei subsp. wolfei (strain DSM 2245B / Goettingen)</name>
    <dbReference type="NCBI Taxonomy" id="335541"/>
    <lineage>
        <taxon>Bacteria</taxon>
        <taxon>Bacillati</taxon>
        <taxon>Bacillota</taxon>
        <taxon>Clostridia</taxon>
        <taxon>Eubacteriales</taxon>
        <taxon>Syntrophomonadaceae</taxon>
        <taxon>Syntrophomonas</taxon>
    </lineage>
</organism>
<dbReference type="EC" id="6.3.2.13" evidence="1"/>
<dbReference type="EMBL" id="CP000448">
    <property type="protein sequence ID" value="ABI68141.1"/>
    <property type="molecule type" value="Genomic_DNA"/>
</dbReference>
<dbReference type="SMR" id="Q0AYR3"/>
<dbReference type="STRING" id="335541.Swol_0821"/>
<dbReference type="KEGG" id="swo:Swol_0821"/>
<dbReference type="eggNOG" id="COG0769">
    <property type="taxonomic scope" value="Bacteria"/>
</dbReference>
<dbReference type="HOGENOM" id="CLU_022291_4_1_9"/>
<dbReference type="OrthoDB" id="9800958at2"/>
<dbReference type="UniPathway" id="UPA00219"/>
<dbReference type="Proteomes" id="UP000001968">
    <property type="component" value="Chromosome"/>
</dbReference>
<dbReference type="GO" id="GO:0005737">
    <property type="term" value="C:cytoplasm"/>
    <property type="evidence" value="ECO:0007669"/>
    <property type="project" value="UniProtKB-SubCell"/>
</dbReference>
<dbReference type="GO" id="GO:0005524">
    <property type="term" value="F:ATP binding"/>
    <property type="evidence" value="ECO:0007669"/>
    <property type="project" value="UniProtKB-UniRule"/>
</dbReference>
<dbReference type="GO" id="GO:0000287">
    <property type="term" value="F:magnesium ion binding"/>
    <property type="evidence" value="ECO:0007669"/>
    <property type="project" value="UniProtKB-UniRule"/>
</dbReference>
<dbReference type="GO" id="GO:0008765">
    <property type="term" value="F:UDP-N-acetylmuramoylalanyl-D-glutamate-2,6-diaminopimelate ligase activity"/>
    <property type="evidence" value="ECO:0007669"/>
    <property type="project" value="UniProtKB-UniRule"/>
</dbReference>
<dbReference type="GO" id="GO:0051301">
    <property type="term" value="P:cell division"/>
    <property type="evidence" value="ECO:0007669"/>
    <property type="project" value="UniProtKB-KW"/>
</dbReference>
<dbReference type="GO" id="GO:0071555">
    <property type="term" value="P:cell wall organization"/>
    <property type="evidence" value="ECO:0007669"/>
    <property type="project" value="UniProtKB-KW"/>
</dbReference>
<dbReference type="GO" id="GO:0009252">
    <property type="term" value="P:peptidoglycan biosynthetic process"/>
    <property type="evidence" value="ECO:0007669"/>
    <property type="project" value="UniProtKB-UniRule"/>
</dbReference>
<dbReference type="GO" id="GO:0008360">
    <property type="term" value="P:regulation of cell shape"/>
    <property type="evidence" value="ECO:0007669"/>
    <property type="project" value="UniProtKB-KW"/>
</dbReference>
<dbReference type="FunFam" id="3.90.190.20:FF:000006">
    <property type="entry name" value="UDP-N-acetylmuramoyl-L-alanyl-D-glutamate--2,6-diaminopimelate ligase"/>
    <property type="match status" value="1"/>
</dbReference>
<dbReference type="Gene3D" id="3.90.190.20">
    <property type="entry name" value="Mur ligase, C-terminal domain"/>
    <property type="match status" value="1"/>
</dbReference>
<dbReference type="Gene3D" id="3.40.1190.10">
    <property type="entry name" value="Mur-like, catalytic domain"/>
    <property type="match status" value="1"/>
</dbReference>
<dbReference type="Gene3D" id="3.40.1390.10">
    <property type="entry name" value="MurE/MurF, N-terminal domain"/>
    <property type="match status" value="1"/>
</dbReference>
<dbReference type="HAMAP" id="MF_00208">
    <property type="entry name" value="MurE"/>
    <property type="match status" value="1"/>
</dbReference>
<dbReference type="InterPro" id="IPR036565">
    <property type="entry name" value="Mur-like_cat_sf"/>
</dbReference>
<dbReference type="InterPro" id="IPR004101">
    <property type="entry name" value="Mur_ligase_C"/>
</dbReference>
<dbReference type="InterPro" id="IPR036615">
    <property type="entry name" value="Mur_ligase_C_dom_sf"/>
</dbReference>
<dbReference type="InterPro" id="IPR013221">
    <property type="entry name" value="Mur_ligase_cen"/>
</dbReference>
<dbReference type="InterPro" id="IPR000713">
    <property type="entry name" value="Mur_ligase_N"/>
</dbReference>
<dbReference type="InterPro" id="IPR035911">
    <property type="entry name" value="MurE/MurF_N"/>
</dbReference>
<dbReference type="InterPro" id="IPR005761">
    <property type="entry name" value="UDP-N-AcMur-Glu-dNH2Pim_ligase"/>
</dbReference>
<dbReference type="NCBIfam" id="TIGR01085">
    <property type="entry name" value="murE"/>
    <property type="match status" value="1"/>
</dbReference>
<dbReference type="NCBIfam" id="NF001124">
    <property type="entry name" value="PRK00139.1-2"/>
    <property type="match status" value="1"/>
</dbReference>
<dbReference type="NCBIfam" id="NF001126">
    <property type="entry name" value="PRK00139.1-4"/>
    <property type="match status" value="1"/>
</dbReference>
<dbReference type="PANTHER" id="PTHR23135">
    <property type="entry name" value="MUR LIGASE FAMILY MEMBER"/>
    <property type="match status" value="1"/>
</dbReference>
<dbReference type="PANTHER" id="PTHR23135:SF4">
    <property type="entry name" value="UDP-N-ACETYLMURAMOYL-L-ALANYL-D-GLUTAMATE--2,6-DIAMINOPIMELATE LIGASE MURE HOMOLOG, CHLOROPLASTIC"/>
    <property type="match status" value="1"/>
</dbReference>
<dbReference type="Pfam" id="PF01225">
    <property type="entry name" value="Mur_ligase"/>
    <property type="match status" value="1"/>
</dbReference>
<dbReference type="Pfam" id="PF02875">
    <property type="entry name" value="Mur_ligase_C"/>
    <property type="match status" value="1"/>
</dbReference>
<dbReference type="Pfam" id="PF08245">
    <property type="entry name" value="Mur_ligase_M"/>
    <property type="match status" value="1"/>
</dbReference>
<dbReference type="SUPFAM" id="SSF53623">
    <property type="entry name" value="MurD-like peptide ligases, catalytic domain"/>
    <property type="match status" value="1"/>
</dbReference>
<dbReference type="SUPFAM" id="SSF53244">
    <property type="entry name" value="MurD-like peptide ligases, peptide-binding domain"/>
    <property type="match status" value="1"/>
</dbReference>
<dbReference type="SUPFAM" id="SSF63418">
    <property type="entry name" value="MurE/MurF N-terminal domain"/>
    <property type="match status" value="1"/>
</dbReference>
<reference key="1">
    <citation type="journal article" date="2010" name="Environ. Microbiol.">
        <title>The genome of Syntrophomonas wolfei: new insights into syntrophic metabolism and biohydrogen production.</title>
        <authorList>
            <person name="Sieber J.R."/>
            <person name="Sims D.R."/>
            <person name="Han C."/>
            <person name="Kim E."/>
            <person name="Lykidis A."/>
            <person name="Lapidus A.L."/>
            <person name="McDonnald E."/>
            <person name="Rohlin L."/>
            <person name="Culley D.E."/>
            <person name="Gunsalus R."/>
            <person name="McInerney M.J."/>
        </authorList>
    </citation>
    <scope>NUCLEOTIDE SEQUENCE [LARGE SCALE GENOMIC DNA]</scope>
    <source>
        <strain>DSM 2245B / Goettingen</strain>
    </source>
</reference>